<dbReference type="EC" id="3.1.1.29" evidence="1"/>
<dbReference type="EMBL" id="CP001097">
    <property type="protein sequence ID" value="ACD90240.1"/>
    <property type="molecule type" value="Genomic_DNA"/>
</dbReference>
<dbReference type="RefSeq" id="WP_012466117.1">
    <property type="nucleotide sequence ID" value="NC_010803.1"/>
</dbReference>
<dbReference type="SMR" id="B3ECG5"/>
<dbReference type="STRING" id="290315.Clim_1172"/>
<dbReference type="KEGG" id="cli:Clim_1172"/>
<dbReference type="eggNOG" id="COG0193">
    <property type="taxonomic scope" value="Bacteria"/>
</dbReference>
<dbReference type="HOGENOM" id="CLU_062456_4_1_10"/>
<dbReference type="OrthoDB" id="9800507at2"/>
<dbReference type="Proteomes" id="UP000008841">
    <property type="component" value="Chromosome"/>
</dbReference>
<dbReference type="GO" id="GO:0005737">
    <property type="term" value="C:cytoplasm"/>
    <property type="evidence" value="ECO:0007669"/>
    <property type="project" value="UniProtKB-SubCell"/>
</dbReference>
<dbReference type="GO" id="GO:0004045">
    <property type="term" value="F:peptidyl-tRNA hydrolase activity"/>
    <property type="evidence" value="ECO:0007669"/>
    <property type="project" value="UniProtKB-UniRule"/>
</dbReference>
<dbReference type="GO" id="GO:0000049">
    <property type="term" value="F:tRNA binding"/>
    <property type="evidence" value="ECO:0007669"/>
    <property type="project" value="UniProtKB-UniRule"/>
</dbReference>
<dbReference type="GO" id="GO:0006515">
    <property type="term" value="P:protein quality control for misfolded or incompletely synthesized proteins"/>
    <property type="evidence" value="ECO:0007669"/>
    <property type="project" value="UniProtKB-UniRule"/>
</dbReference>
<dbReference type="GO" id="GO:0072344">
    <property type="term" value="P:rescue of stalled ribosome"/>
    <property type="evidence" value="ECO:0007669"/>
    <property type="project" value="UniProtKB-UniRule"/>
</dbReference>
<dbReference type="CDD" id="cd00462">
    <property type="entry name" value="PTH"/>
    <property type="match status" value="1"/>
</dbReference>
<dbReference type="FunFam" id="3.40.50.1470:FF:000001">
    <property type="entry name" value="Peptidyl-tRNA hydrolase"/>
    <property type="match status" value="1"/>
</dbReference>
<dbReference type="Gene3D" id="3.40.50.1470">
    <property type="entry name" value="Peptidyl-tRNA hydrolase"/>
    <property type="match status" value="1"/>
</dbReference>
<dbReference type="HAMAP" id="MF_00083">
    <property type="entry name" value="Pept_tRNA_hydro_bact"/>
    <property type="match status" value="1"/>
</dbReference>
<dbReference type="InterPro" id="IPR001328">
    <property type="entry name" value="Pept_tRNA_hydro"/>
</dbReference>
<dbReference type="InterPro" id="IPR018171">
    <property type="entry name" value="Pept_tRNA_hydro_CS"/>
</dbReference>
<dbReference type="InterPro" id="IPR036416">
    <property type="entry name" value="Pept_tRNA_hydro_sf"/>
</dbReference>
<dbReference type="NCBIfam" id="TIGR00447">
    <property type="entry name" value="pth"/>
    <property type="match status" value="1"/>
</dbReference>
<dbReference type="PANTHER" id="PTHR17224">
    <property type="entry name" value="PEPTIDYL-TRNA HYDROLASE"/>
    <property type="match status" value="1"/>
</dbReference>
<dbReference type="PANTHER" id="PTHR17224:SF1">
    <property type="entry name" value="PEPTIDYL-TRNA HYDROLASE"/>
    <property type="match status" value="1"/>
</dbReference>
<dbReference type="Pfam" id="PF01195">
    <property type="entry name" value="Pept_tRNA_hydro"/>
    <property type="match status" value="1"/>
</dbReference>
<dbReference type="SUPFAM" id="SSF53178">
    <property type="entry name" value="Peptidyl-tRNA hydrolase-like"/>
    <property type="match status" value="1"/>
</dbReference>
<dbReference type="PROSITE" id="PS01195">
    <property type="entry name" value="PEPT_TRNA_HYDROL_1"/>
    <property type="match status" value="1"/>
</dbReference>
<keyword id="KW-0963">Cytoplasm</keyword>
<keyword id="KW-0378">Hydrolase</keyword>
<keyword id="KW-0694">RNA-binding</keyword>
<keyword id="KW-0820">tRNA-binding</keyword>
<organism>
    <name type="scientific">Chlorobium limicola (strain DSM 245 / NBRC 103803 / 6330)</name>
    <dbReference type="NCBI Taxonomy" id="290315"/>
    <lineage>
        <taxon>Bacteria</taxon>
        <taxon>Pseudomonadati</taxon>
        <taxon>Chlorobiota</taxon>
        <taxon>Chlorobiia</taxon>
        <taxon>Chlorobiales</taxon>
        <taxon>Chlorobiaceae</taxon>
        <taxon>Chlorobium/Pelodictyon group</taxon>
        <taxon>Chlorobium</taxon>
    </lineage>
</organism>
<sequence>MKLVIGLGNPESKYSGTRHNVGFDVIDRLSESFQIPFTAGKGKYHFAKINWRNTAIVLLKPMTYMNLSGHAVVAAMNFYKIQRQDILVICDDLNLPSGTLRLRAKGSAGGQNGLKHIIECLGNDEFARMRVGIRLEDQPLSSFSSFVLGKFSEDEKKTMEKILPVCADAALDFSVNGIEHAMNHYNKPAA</sequence>
<accession>B3ECG5</accession>
<reference key="1">
    <citation type="submission" date="2008-05" db="EMBL/GenBank/DDBJ databases">
        <title>Complete sequence of Chlorobium limicola DSM 245.</title>
        <authorList>
            <consortium name="US DOE Joint Genome Institute"/>
            <person name="Lucas S."/>
            <person name="Copeland A."/>
            <person name="Lapidus A."/>
            <person name="Glavina del Rio T."/>
            <person name="Dalin E."/>
            <person name="Tice H."/>
            <person name="Bruce D."/>
            <person name="Goodwin L."/>
            <person name="Pitluck S."/>
            <person name="Schmutz J."/>
            <person name="Larimer F."/>
            <person name="Land M."/>
            <person name="Hauser L."/>
            <person name="Kyrpides N."/>
            <person name="Ovchinnikova G."/>
            <person name="Zhao F."/>
            <person name="Li T."/>
            <person name="Liu Z."/>
            <person name="Overmann J."/>
            <person name="Bryant D.A."/>
            <person name="Richardson P."/>
        </authorList>
    </citation>
    <scope>NUCLEOTIDE SEQUENCE [LARGE SCALE GENOMIC DNA]</scope>
    <source>
        <strain>DSM 245 / NBRC 103803 / 6330</strain>
    </source>
</reference>
<evidence type="ECO:0000255" key="1">
    <source>
        <dbReference type="HAMAP-Rule" id="MF_00083"/>
    </source>
</evidence>
<gene>
    <name evidence="1" type="primary">pth</name>
    <name type="ordered locus">Clim_1172</name>
</gene>
<protein>
    <recommendedName>
        <fullName evidence="1">Peptidyl-tRNA hydrolase</fullName>
        <shortName evidence="1">Pth</shortName>
        <ecNumber evidence="1">3.1.1.29</ecNumber>
    </recommendedName>
</protein>
<feature type="chain" id="PRO_1000092922" description="Peptidyl-tRNA hydrolase">
    <location>
        <begin position="1"/>
        <end position="190"/>
    </location>
</feature>
<feature type="active site" description="Proton acceptor" evidence="1">
    <location>
        <position position="19"/>
    </location>
</feature>
<feature type="binding site" evidence="1">
    <location>
        <position position="14"/>
    </location>
    <ligand>
        <name>tRNA</name>
        <dbReference type="ChEBI" id="CHEBI:17843"/>
    </ligand>
</feature>
<feature type="binding site" evidence="1">
    <location>
        <position position="64"/>
    </location>
    <ligand>
        <name>tRNA</name>
        <dbReference type="ChEBI" id="CHEBI:17843"/>
    </ligand>
</feature>
<feature type="binding site" evidence="1">
    <location>
        <position position="66"/>
    </location>
    <ligand>
        <name>tRNA</name>
        <dbReference type="ChEBI" id="CHEBI:17843"/>
    </ligand>
</feature>
<feature type="binding site" evidence="1">
    <location>
        <position position="112"/>
    </location>
    <ligand>
        <name>tRNA</name>
        <dbReference type="ChEBI" id="CHEBI:17843"/>
    </ligand>
</feature>
<feature type="site" description="Discriminates between blocked and unblocked aminoacyl-tRNA" evidence="1">
    <location>
        <position position="9"/>
    </location>
</feature>
<feature type="site" description="Stabilizes the basic form of H active site to accept a proton" evidence="1">
    <location>
        <position position="91"/>
    </location>
</feature>
<proteinExistence type="inferred from homology"/>
<comment type="function">
    <text evidence="1">Hydrolyzes ribosome-free peptidyl-tRNAs (with 1 or more amino acids incorporated), which drop off the ribosome during protein synthesis, or as a result of ribosome stalling.</text>
</comment>
<comment type="function">
    <text evidence="1">Catalyzes the release of premature peptidyl moieties from peptidyl-tRNA molecules trapped in stalled 50S ribosomal subunits, and thus maintains levels of free tRNAs and 50S ribosomes.</text>
</comment>
<comment type="catalytic activity">
    <reaction evidence="1">
        <text>an N-acyl-L-alpha-aminoacyl-tRNA + H2O = an N-acyl-L-amino acid + a tRNA + H(+)</text>
        <dbReference type="Rhea" id="RHEA:54448"/>
        <dbReference type="Rhea" id="RHEA-COMP:10123"/>
        <dbReference type="Rhea" id="RHEA-COMP:13883"/>
        <dbReference type="ChEBI" id="CHEBI:15377"/>
        <dbReference type="ChEBI" id="CHEBI:15378"/>
        <dbReference type="ChEBI" id="CHEBI:59874"/>
        <dbReference type="ChEBI" id="CHEBI:78442"/>
        <dbReference type="ChEBI" id="CHEBI:138191"/>
        <dbReference type="EC" id="3.1.1.29"/>
    </reaction>
</comment>
<comment type="subunit">
    <text evidence="1">Monomer.</text>
</comment>
<comment type="subcellular location">
    <subcellularLocation>
        <location evidence="1">Cytoplasm</location>
    </subcellularLocation>
</comment>
<comment type="similarity">
    <text evidence="1">Belongs to the PTH family.</text>
</comment>
<name>PTH_CHLL2</name>